<protein>
    <recommendedName>
        <fullName evidence="1">Ion-translocating oxidoreductase complex subunit B</fullName>
        <ecNumber evidence="1">7.-.-.-</ecNumber>
    </recommendedName>
    <alternativeName>
        <fullName evidence="1">Rsx electron transport complex subunit B</fullName>
    </alternativeName>
</protein>
<gene>
    <name evidence="1" type="primary">rsxB</name>
    <name type="synonym">rnfB</name>
    <name type="ordered locus">SeHA_C1628</name>
</gene>
<reference key="1">
    <citation type="journal article" date="2011" name="J. Bacteriol.">
        <title>Comparative genomics of 28 Salmonella enterica isolates: evidence for CRISPR-mediated adaptive sublineage evolution.</title>
        <authorList>
            <person name="Fricke W.F."/>
            <person name="Mammel M.K."/>
            <person name="McDermott P.F."/>
            <person name="Tartera C."/>
            <person name="White D.G."/>
            <person name="Leclerc J.E."/>
            <person name="Ravel J."/>
            <person name="Cebula T.A."/>
        </authorList>
    </citation>
    <scope>NUCLEOTIDE SEQUENCE [LARGE SCALE GENOMIC DNA]</scope>
    <source>
        <strain>SL476</strain>
    </source>
</reference>
<keyword id="KW-0004">4Fe-4S</keyword>
<keyword id="KW-0997">Cell inner membrane</keyword>
<keyword id="KW-1003">Cell membrane</keyword>
<keyword id="KW-0249">Electron transport</keyword>
<keyword id="KW-0408">Iron</keyword>
<keyword id="KW-0411">Iron-sulfur</keyword>
<keyword id="KW-0472">Membrane</keyword>
<keyword id="KW-0479">Metal-binding</keyword>
<keyword id="KW-0677">Repeat</keyword>
<keyword id="KW-1278">Translocase</keyword>
<keyword id="KW-0813">Transport</keyword>
<accession>B4THD5</accession>
<feature type="chain" id="PRO_1000194495" description="Ion-translocating oxidoreductase complex subunit B">
    <location>
        <begin position="1"/>
        <end position="192"/>
    </location>
</feature>
<feature type="domain" description="4Fe-4S" evidence="1">
    <location>
        <begin position="32"/>
        <end position="91"/>
    </location>
</feature>
<feature type="domain" description="4Fe-4S ferredoxin-type 1" evidence="1">
    <location>
        <begin position="108"/>
        <end position="137"/>
    </location>
</feature>
<feature type="domain" description="4Fe-4S ferredoxin-type 2" evidence="1">
    <location>
        <begin position="138"/>
        <end position="167"/>
    </location>
</feature>
<feature type="region of interest" description="Hydrophobic" evidence="1">
    <location>
        <begin position="1"/>
        <end position="26"/>
    </location>
</feature>
<feature type="binding site" evidence="1">
    <location>
        <position position="49"/>
    </location>
    <ligand>
        <name>[4Fe-4S] cluster</name>
        <dbReference type="ChEBI" id="CHEBI:49883"/>
        <label>1</label>
    </ligand>
</feature>
<feature type="binding site" evidence="1">
    <location>
        <position position="52"/>
    </location>
    <ligand>
        <name>[4Fe-4S] cluster</name>
        <dbReference type="ChEBI" id="CHEBI:49883"/>
        <label>1</label>
    </ligand>
</feature>
<feature type="binding site" evidence="1">
    <location>
        <position position="57"/>
    </location>
    <ligand>
        <name>[4Fe-4S] cluster</name>
        <dbReference type="ChEBI" id="CHEBI:49883"/>
        <label>1</label>
    </ligand>
</feature>
<feature type="binding site" evidence="1">
    <location>
        <position position="74"/>
    </location>
    <ligand>
        <name>[4Fe-4S] cluster</name>
        <dbReference type="ChEBI" id="CHEBI:49883"/>
        <label>1</label>
    </ligand>
</feature>
<feature type="binding site" evidence="1">
    <location>
        <position position="117"/>
    </location>
    <ligand>
        <name>[4Fe-4S] cluster</name>
        <dbReference type="ChEBI" id="CHEBI:49883"/>
        <label>2</label>
    </ligand>
</feature>
<feature type="binding site" evidence="1">
    <location>
        <position position="120"/>
    </location>
    <ligand>
        <name>[4Fe-4S] cluster</name>
        <dbReference type="ChEBI" id="CHEBI:49883"/>
        <label>2</label>
    </ligand>
</feature>
<feature type="binding site" evidence="1">
    <location>
        <position position="123"/>
    </location>
    <ligand>
        <name>[4Fe-4S] cluster</name>
        <dbReference type="ChEBI" id="CHEBI:49883"/>
        <label>2</label>
    </ligand>
</feature>
<feature type="binding site" evidence="1">
    <location>
        <position position="127"/>
    </location>
    <ligand>
        <name>[4Fe-4S] cluster</name>
        <dbReference type="ChEBI" id="CHEBI:49883"/>
        <label>3</label>
    </ligand>
</feature>
<feature type="binding site" evidence="1">
    <location>
        <position position="147"/>
    </location>
    <ligand>
        <name>[4Fe-4S] cluster</name>
        <dbReference type="ChEBI" id="CHEBI:49883"/>
        <label>3</label>
    </ligand>
</feature>
<feature type="binding site" evidence="1">
    <location>
        <position position="150"/>
    </location>
    <ligand>
        <name>[4Fe-4S] cluster</name>
        <dbReference type="ChEBI" id="CHEBI:49883"/>
        <label>3</label>
    </ligand>
</feature>
<feature type="binding site" evidence="1">
    <location>
        <position position="153"/>
    </location>
    <ligand>
        <name>[4Fe-4S] cluster</name>
        <dbReference type="ChEBI" id="CHEBI:49883"/>
        <label>3</label>
    </ligand>
</feature>
<feature type="binding site" evidence="1">
    <location>
        <position position="157"/>
    </location>
    <ligand>
        <name>[4Fe-4S] cluster</name>
        <dbReference type="ChEBI" id="CHEBI:49883"/>
        <label>2</label>
    </ligand>
</feature>
<sequence length="192" mass="20659">MNTIWIAVGALTLLGLVFGAILGYASRRFAVEDDPVVEKIDAILPQSQCGQCGYPGCRPYAEAVGLQGEKINRCAPGGEAVMLKIAELLNVEPQPCDGEEQQAAPVRMLAVIDENNCIGCTKCIQACPVDAIVGATRAMHTVMSDLCTGCNLCVDPCPTHCIELRPVNETPDSWKWDLNTIPVRIIPVEQHA</sequence>
<dbReference type="EC" id="7.-.-.-" evidence="1"/>
<dbReference type="EMBL" id="CP001120">
    <property type="protein sequence ID" value="ACF66617.1"/>
    <property type="molecule type" value="Genomic_DNA"/>
</dbReference>
<dbReference type="RefSeq" id="WP_001092597.1">
    <property type="nucleotide sequence ID" value="NC_011083.1"/>
</dbReference>
<dbReference type="SMR" id="B4THD5"/>
<dbReference type="KEGG" id="seh:SeHA_C1628"/>
<dbReference type="HOGENOM" id="CLU_063448_2_0_6"/>
<dbReference type="Proteomes" id="UP000001866">
    <property type="component" value="Chromosome"/>
</dbReference>
<dbReference type="GO" id="GO:0005886">
    <property type="term" value="C:plasma membrane"/>
    <property type="evidence" value="ECO:0007669"/>
    <property type="project" value="UniProtKB-SubCell"/>
</dbReference>
<dbReference type="GO" id="GO:0051539">
    <property type="term" value="F:4 iron, 4 sulfur cluster binding"/>
    <property type="evidence" value="ECO:0007669"/>
    <property type="project" value="UniProtKB-UniRule"/>
</dbReference>
<dbReference type="GO" id="GO:0009055">
    <property type="term" value="F:electron transfer activity"/>
    <property type="evidence" value="ECO:0007669"/>
    <property type="project" value="InterPro"/>
</dbReference>
<dbReference type="GO" id="GO:0046872">
    <property type="term" value="F:metal ion binding"/>
    <property type="evidence" value="ECO:0007669"/>
    <property type="project" value="UniProtKB-KW"/>
</dbReference>
<dbReference type="GO" id="GO:0022900">
    <property type="term" value="P:electron transport chain"/>
    <property type="evidence" value="ECO:0007669"/>
    <property type="project" value="UniProtKB-UniRule"/>
</dbReference>
<dbReference type="FunFam" id="1.10.15.40:FF:000001">
    <property type="entry name" value="Ion-translocating oxidoreductase complex subunit B"/>
    <property type="match status" value="1"/>
</dbReference>
<dbReference type="Gene3D" id="3.30.70.20">
    <property type="match status" value="1"/>
</dbReference>
<dbReference type="Gene3D" id="1.10.15.40">
    <property type="entry name" value="Electron transport complex subunit B, putative Fe-S cluster"/>
    <property type="match status" value="1"/>
</dbReference>
<dbReference type="HAMAP" id="MF_00463">
    <property type="entry name" value="RsxB_RnfB"/>
    <property type="match status" value="1"/>
</dbReference>
<dbReference type="InterPro" id="IPR007202">
    <property type="entry name" value="4Fe-4S_dom"/>
</dbReference>
<dbReference type="InterPro" id="IPR017896">
    <property type="entry name" value="4Fe4S_Fe-S-bd"/>
</dbReference>
<dbReference type="InterPro" id="IPR017900">
    <property type="entry name" value="4Fe4S_Fe_S_CS"/>
</dbReference>
<dbReference type="InterPro" id="IPR050395">
    <property type="entry name" value="4Fe4S_Ferredoxin_RnfB"/>
</dbReference>
<dbReference type="InterPro" id="IPR010207">
    <property type="entry name" value="Elect_transpt_cplx_RnfB/RsxB"/>
</dbReference>
<dbReference type="InterPro" id="IPR016463">
    <property type="entry name" value="RnfB/RsxB_Proteobac"/>
</dbReference>
<dbReference type="NCBIfam" id="NF003475">
    <property type="entry name" value="PRK05113.1"/>
    <property type="match status" value="1"/>
</dbReference>
<dbReference type="NCBIfam" id="TIGR01944">
    <property type="entry name" value="rnfB"/>
    <property type="match status" value="1"/>
</dbReference>
<dbReference type="PANTHER" id="PTHR43560">
    <property type="entry name" value="ION-TRANSLOCATING OXIDOREDUCTASE COMPLEX SUBUNIT B"/>
    <property type="match status" value="1"/>
</dbReference>
<dbReference type="PANTHER" id="PTHR43560:SF1">
    <property type="entry name" value="ION-TRANSLOCATING OXIDOREDUCTASE COMPLEX SUBUNIT B"/>
    <property type="match status" value="1"/>
</dbReference>
<dbReference type="Pfam" id="PF14697">
    <property type="entry name" value="Fer4_21"/>
    <property type="match status" value="1"/>
</dbReference>
<dbReference type="Pfam" id="PF04060">
    <property type="entry name" value="FeS"/>
    <property type="match status" value="1"/>
</dbReference>
<dbReference type="PIRSF" id="PIRSF005784">
    <property type="entry name" value="Elect_transpt_RnfB"/>
    <property type="match status" value="1"/>
</dbReference>
<dbReference type="SUPFAM" id="SSF54862">
    <property type="entry name" value="4Fe-4S ferredoxins"/>
    <property type="match status" value="1"/>
</dbReference>
<dbReference type="PROSITE" id="PS51656">
    <property type="entry name" value="4FE4S"/>
    <property type="match status" value="1"/>
</dbReference>
<dbReference type="PROSITE" id="PS00198">
    <property type="entry name" value="4FE4S_FER_1"/>
    <property type="match status" value="2"/>
</dbReference>
<dbReference type="PROSITE" id="PS51379">
    <property type="entry name" value="4FE4S_FER_2"/>
    <property type="match status" value="2"/>
</dbReference>
<name>RSXB_SALHS</name>
<evidence type="ECO:0000255" key="1">
    <source>
        <dbReference type="HAMAP-Rule" id="MF_00463"/>
    </source>
</evidence>
<comment type="function">
    <text evidence="1">Part of a membrane-bound complex that couples electron transfer with translocation of ions across the membrane. Required to maintain the reduced state of SoxR.</text>
</comment>
<comment type="cofactor">
    <cofactor evidence="1">
        <name>[4Fe-4S] cluster</name>
        <dbReference type="ChEBI" id="CHEBI:49883"/>
    </cofactor>
    <text evidence="1">Binds 3 [4Fe-4S] clusters.</text>
</comment>
<comment type="subunit">
    <text evidence="1">The complex is composed of six subunits: RsxA, RsxB, RsxC, RsxD, RsxE and RsxG.</text>
</comment>
<comment type="subcellular location">
    <subcellularLocation>
        <location evidence="1">Cell inner membrane</location>
    </subcellularLocation>
</comment>
<comment type="similarity">
    <text evidence="1">Belongs to the 4Fe4S bacterial-type ferredoxin family. RnfB subfamily.</text>
</comment>
<organism>
    <name type="scientific">Salmonella heidelberg (strain SL476)</name>
    <dbReference type="NCBI Taxonomy" id="454169"/>
    <lineage>
        <taxon>Bacteria</taxon>
        <taxon>Pseudomonadati</taxon>
        <taxon>Pseudomonadota</taxon>
        <taxon>Gammaproteobacteria</taxon>
        <taxon>Enterobacterales</taxon>
        <taxon>Enterobacteriaceae</taxon>
        <taxon>Salmonella</taxon>
    </lineage>
</organism>
<proteinExistence type="inferred from homology"/>